<organism>
    <name type="scientific">Mycobacterium tuberculosis (strain ATCC 25618 / H37Rv)</name>
    <dbReference type="NCBI Taxonomy" id="83332"/>
    <lineage>
        <taxon>Bacteria</taxon>
        <taxon>Bacillati</taxon>
        <taxon>Actinomycetota</taxon>
        <taxon>Actinomycetes</taxon>
        <taxon>Mycobacteriales</taxon>
        <taxon>Mycobacteriaceae</taxon>
        <taxon>Mycobacterium</taxon>
        <taxon>Mycobacterium tuberculosis complex</taxon>
    </lineage>
</organism>
<evidence type="ECO:0000250" key="1"/>
<evidence type="ECO:0000305" key="2"/>
<evidence type="ECO:0007829" key="3">
    <source>
        <dbReference type="PDB" id="7QH8"/>
    </source>
</evidence>
<evidence type="ECO:0007829" key="4">
    <source>
        <dbReference type="PDB" id="7QI8"/>
    </source>
</evidence>
<gene>
    <name type="primary">lysS1</name>
    <name type="synonym">lysS</name>
    <name type="ordered locus">Rv3598c</name>
    <name type="ORF">MTCY07H7B.24</name>
</gene>
<protein>
    <recommendedName>
        <fullName>Lysine--tRNA ligase 1</fullName>
        <ecNumber>6.1.1.6</ecNumber>
    </recommendedName>
    <alternativeName>
        <fullName>Lysyl-tRNA synthetase 1</fullName>
        <shortName>LysRS 1</shortName>
    </alternativeName>
</protein>
<reference key="1">
    <citation type="journal article" date="1998" name="Nature">
        <title>Deciphering the biology of Mycobacterium tuberculosis from the complete genome sequence.</title>
        <authorList>
            <person name="Cole S.T."/>
            <person name="Brosch R."/>
            <person name="Parkhill J."/>
            <person name="Garnier T."/>
            <person name="Churcher C.M."/>
            <person name="Harris D.E."/>
            <person name="Gordon S.V."/>
            <person name="Eiglmeier K."/>
            <person name="Gas S."/>
            <person name="Barry C.E. III"/>
            <person name="Tekaia F."/>
            <person name="Badcock K."/>
            <person name="Basham D."/>
            <person name="Brown D."/>
            <person name="Chillingworth T."/>
            <person name="Connor R."/>
            <person name="Davies R.M."/>
            <person name="Devlin K."/>
            <person name="Feltwell T."/>
            <person name="Gentles S."/>
            <person name="Hamlin N."/>
            <person name="Holroyd S."/>
            <person name="Hornsby T."/>
            <person name="Jagels K."/>
            <person name="Krogh A."/>
            <person name="McLean J."/>
            <person name="Moule S."/>
            <person name="Murphy L.D."/>
            <person name="Oliver S."/>
            <person name="Osborne J."/>
            <person name="Quail M.A."/>
            <person name="Rajandream M.A."/>
            <person name="Rogers J."/>
            <person name="Rutter S."/>
            <person name="Seeger K."/>
            <person name="Skelton S."/>
            <person name="Squares S."/>
            <person name="Squares R."/>
            <person name="Sulston J.E."/>
            <person name="Taylor K."/>
            <person name="Whitehead S."/>
            <person name="Barrell B.G."/>
        </authorList>
    </citation>
    <scope>NUCLEOTIDE SEQUENCE [LARGE SCALE GENOMIC DNA]</scope>
    <source>
        <strain>ATCC 25618 / H37Rv</strain>
    </source>
</reference>
<reference key="2">
    <citation type="journal article" date="2011" name="Mol. Cell. Proteomics">
        <title>Proteogenomic analysis of Mycobacterium tuberculosis by high resolution mass spectrometry.</title>
        <authorList>
            <person name="Kelkar D.S."/>
            <person name="Kumar D."/>
            <person name="Kumar P."/>
            <person name="Balakrishnan L."/>
            <person name="Muthusamy B."/>
            <person name="Yadav A.K."/>
            <person name="Shrivastava P."/>
            <person name="Marimuthu A."/>
            <person name="Anand S."/>
            <person name="Sundaram H."/>
            <person name="Kingsbury R."/>
            <person name="Harsha H.C."/>
            <person name="Nair B."/>
            <person name="Prasad T.S."/>
            <person name="Chauhan D.S."/>
            <person name="Katoch K."/>
            <person name="Katoch V.M."/>
            <person name="Kumar P."/>
            <person name="Chaerkady R."/>
            <person name="Ramachandran S."/>
            <person name="Dash D."/>
            <person name="Pandey A."/>
        </authorList>
    </citation>
    <scope>IDENTIFICATION BY MASS SPECTROMETRY [LARGE SCALE ANALYSIS]</scope>
    <source>
        <strain>ATCC 25618 / H37Rv</strain>
    </source>
</reference>
<name>SYK1_MYCTU</name>
<accession>P9WFU9</accession>
<accession>L0TFZ4</accession>
<accession>O06284</accession>
<accession>P67607</accession>
<keyword id="KW-0002">3D-structure</keyword>
<keyword id="KW-0030">Aminoacyl-tRNA synthetase</keyword>
<keyword id="KW-0067">ATP-binding</keyword>
<keyword id="KW-0963">Cytoplasm</keyword>
<keyword id="KW-0436">Ligase</keyword>
<keyword id="KW-0460">Magnesium</keyword>
<keyword id="KW-0479">Metal-binding</keyword>
<keyword id="KW-0547">Nucleotide-binding</keyword>
<keyword id="KW-0648">Protein biosynthesis</keyword>
<keyword id="KW-1185">Reference proteome</keyword>
<comment type="catalytic activity">
    <reaction>
        <text>tRNA(Lys) + L-lysine + ATP = L-lysyl-tRNA(Lys) + AMP + diphosphate</text>
        <dbReference type="Rhea" id="RHEA:20792"/>
        <dbReference type="Rhea" id="RHEA-COMP:9696"/>
        <dbReference type="Rhea" id="RHEA-COMP:9697"/>
        <dbReference type="ChEBI" id="CHEBI:30616"/>
        <dbReference type="ChEBI" id="CHEBI:32551"/>
        <dbReference type="ChEBI" id="CHEBI:33019"/>
        <dbReference type="ChEBI" id="CHEBI:78442"/>
        <dbReference type="ChEBI" id="CHEBI:78529"/>
        <dbReference type="ChEBI" id="CHEBI:456215"/>
        <dbReference type="EC" id="6.1.1.6"/>
    </reaction>
</comment>
<comment type="cofactor">
    <cofactor evidence="1">
        <name>Mg(2+)</name>
        <dbReference type="ChEBI" id="CHEBI:18420"/>
    </cofactor>
    <text evidence="1">Binds 3 Mg(2+) ions per subunit.</text>
</comment>
<comment type="subunit">
    <text evidence="1">Homodimer.</text>
</comment>
<comment type="subcellular location">
    <subcellularLocation>
        <location evidence="1">Cytoplasm</location>
    </subcellularLocation>
</comment>
<comment type="miscellaneous">
    <text>There are two lysyl-tRNA ligases in M.tuberculosis.</text>
</comment>
<comment type="similarity">
    <text evidence="2">Belongs to the class-II aminoacyl-tRNA synthetase family.</text>
</comment>
<dbReference type="EC" id="6.1.1.6"/>
<dbReference type="EMBL" id="AL123456">
    <property type="protein sequence ID" value="CCP46421.1"/>
    <property type="molecule type" value="Genomic_DNA"/>
</dbReference>
<dbReference type="PIR" id="G70954">
    <property type="entry name" value="G70954"/>
</dbReference>
<dbReference type="RefSeq" id="NP_218115.1">
    <property type="nucleotide sequence ID" value="NC_000962.3"/>
</dbReference>
<dbReference type="RefSeq" id="WP_003419514.1">
    <property type="nucleotide sequence ID" value="NZ_NVQJ01000056.1"/>
</dbReference>
<dbReference type="PDB" id="7QH8">
    <property type="method" value="X-ray"/>
    <property type="resolution" value="1.92 A"/>
    <property type="chains" value="A=1-505"/>
</dbReference>
<dbReference type="PDB" id="7QHN">
    <property type="method" value="X-ray"/>
    <property type="resolution" value="2.58 A"/>
    <property type="chains" value="A=1-505"/>
</dbReference>
<dbReference type="PDB" id="7QI8">
    <property type="method" value="X-ray"/>
    <property type="resolution" value="2.20 A"/>
    <property type="chains" value="A=1-505"/>
</dbReference>
<dbReference type="PDBsum" id="7QH8"/>
<dbReference type="PDBsum" id="7QHN"/>
<dbReference type="PDBsum" id="7QI8"/>
<dbReference type="SMR" id="P9WFU9"/>
<dbReference type="FunCoup" id="P9WFU9">
    <property type="interactions" value="533"/>
</dbReference>
<dbReference type="STRING" id="83332.Rv3598c"/>
<dbReference type="PaxDb" id="83332-Rv3598c"/>
<dbReference type="DNASU" id="885574"/>
<dbReference type="GeneID" id="885574"/>
<dbReference type="KEGG" id="mtu:Rv3598c"/>
<dbReference type="KEGG" id="mtv:RVBD_3598c"/>
<dbReference type="TubercuList" id="Rv3598c"/>
<dbReference type="eggNOG" id="COG1190">
    <property type="taxonomic scope" value="Bacteria"/>
</dbReference>
<dbReference type="InParanoid" id="P9WFU9"/>
<dbReference type="OrthoDB" id="9801152at2"/>
<dbReference type="PhylomeDB" id="P9WFU9"/>
<dbReference type="Proteomes" id="UP000001584">
    <property type="component" value="Chromosome"/>
</dbReference>
<dbReference type="GO" id="GO:0005737">
    <property type="term" value="C:cytoplasm"/>
    <property type="evidence" value="ECO:0000318"/>
    <property type="project" value="GO_Central"/>
</dbReference>
<dbReference type="GO" id="GO:0005829">
    <property type="term" value="C:cytosol"/>
    <property type="evidence" value="ECO:0000318"/>
    <property type="project" value="GO_Central"/>
</dbReference>
<dbReference type="GO" id="GO:0005524">
    <property type="term" value="F:ATP binding"/>
    <property type="evidence" value="ECO:0007669"/>
    <property type="project" value="UniProtKB-UniRule"/>
</dbReference>
<dbReference type="GO" id="GO:0004824">
    <property type="term" value="F:lysine-tRNA ligase activity"/>
    <property type="evidence" value="ECO:0000318"/>
    <property type="project" value="GO_Central"/>
</dbReference>
<dbReference type="GO" id="GO:0000287">
    <property type="term" value="F:magnesium ion binding"/>
    <property type="evidence" value="ECO:0007669"/>
    <property type="project" value="UniProtKB-UniRule"/>
</dbReference>
<dbReference type="GO" id="GO:0000049">
    <property type="term" value="F:tRNA binding"/>
    <property type="evidence" value="ECO:0000318"/>
    <property type="project" value="GO_Central"/>
</dbReference>
<dbReference type="GO" id="GO:0006430">
    <property type="term" value="P:lysyl-tRNA aminoacylation"/>
    <property type="evidence" value="ECO:0000318"/>
    <property type="project" value="GO_Central"/>
</dbReference>
<dbReference type="CDD" id="cd04322">
    <property type="entry name" value="LysRS_N"/>
    <property type="match status" value="1"/>
</dbReference>
<dbReference type="FunFam" id="2.40.50.140:FF:000024">
    <property type="entry name" value="Lysine--tRNA ligase"/>
    <property type="match status" value="1"/>
</dbReference>
<dbReference type="FunFam" id="3.30.930.10:FF:000079">
    <property type="entry name" value="Lysine--tRNA ligase 1"/>
    <property type="match status" value="1"/>
</dbReference>
<dbReference type="Gene3D" id="3.30.930.10">
    <property type="entry name" value="Bira Bifunctional Protein, Domain 2"/>
    <property type="match status" value="1"/>
</dbReference>
<dbReference type="Gene3D" id="2.40.50.140">
    <property type="entry name" value="Nucleic acid-binding proteins"/>
    <property type="match status" value="1"/>
</dbReference>
<dbReference type="HAMAP" id="MF_00252">
    <property type="entry name" value="Lys_tRNA_synth_class2"/>
    <property type="match status" value="1"/>
</dbReference>
<dbReference type="InterPro" id="IPR004364">
    <property type="entry name" value="Aa-tRNA-synt_II"/>
</dbReference>
<dbReference type="InterPro" id="IPR006195">
    <property type="entry name" value="aa-tRNA-synth_II"/>
</dbReference>
<dbReference type="InterPro" id="IPR045864">
    <property type="entry name" value="aa-tRNA-synth_II/BPL/LPL"/>
</dbReference>
<dbReference type="InterPro" id="IPR002313">
    <property type="entry name" value="Lys-tRNA-ligase_II"/>
</dbReference>
<dbReference type="InterPro" id="IPR044136">
    <property type="entry name" value="Lys-tRNA-ligase_II_N"/>
</dbReference>
<dbReference type="InterPro" id="IPR018149">
    <property type="entry name" value="Lys-tRNA-synth_II_C"/>
</dbReference>
<dbReference type="InterPro" id="IPR012340">
    <property type="entry name" value="NA-bd_OB-fold"/>
</dbReference>
<dbReference type="InterPro" id="IPR004365">
    <property type="entry name" value="NA-bd_OB_tRNA"/>
</dbReference>
<dbReference type="NCBIfam" id="TIGR00499">
    <property type="entry name" value="lysS_bact"/>
    <property type="match status" value="1"/>
</dbReference>
<dbReference type="NCBIfam" id="NF001756">
    <property type="entry name" value="PRK00484.1"/>
    <property type="match status" value="1"/>
</dbReference>
<dbReference type="PANTHER" id="PTHR42918:SF15">
    <property type="entry name" value="LYSINE--TRNA LIGASE, CHLOROPLASTIC_MITOCHONDRIAL"/>
    <property type="match status" value="1"/>
</dbReference>
<dbReference type="PANTHER" id="PTHR42918">
    <property type="entry name" value="LYSYL-TRNA SYNTHETASE"/>
    <property type="match status" value="1"/>
</dbReference>
<dbReference type="Pfam" id="PF00152">
    <property type="entry name" value="tRNA-synt_2"/>
    <property type="match status" value="1"/>
</dbReference>
<dbReference type="Pfam" id="PF01336">
    <property type="entry name" value="tRNA_anti-codon"/>
    <property type="match status" value="1"/>
</dbReference>
<dbReference type="PRINTS" id="PR00982">
    <property type="entry name" value="TRNASYNTHLYS"/>
</dbReference>
<dbReference type="SUPFAM" id="SSF55681">
    <property type="entry name" value="Class II aaRS and biotin synthetases"/>
    <property type="match status" value="1"/>
</dbReference>
<dbReference type="SUPFAM" id="SSF50249">
    <property type="entry name" value="Nucleic acid-binding proteins"/>
    <property type="match status" value="1"/>
</dbReference>
<dbReference type="PROSITE" id="PS50862">
    <property type="entry name" value="AA_TRNA_LIGASE_II"/>
    <property type="match status" value="1"/>
</dbReference>
<proteinExistence type="evidence at protein level"/>
<feature type="chain" id="PRO_0000152655" description="Lysine--tRNA ligase 1">
    <location>
        <begin position="1"/>
        <end position="505"/>
    </location>
</feature>
<feature type="binding site" evidence="1">
    <location>
        <position position="415"/>
    </location>
    <ligand>
        <name>Mg(2+)</name>
        <dbReference type="ChEBI" id="CHEBI:18420"/>
        <label>1</label>
    </ligand>
</feature>
<feature type="binding site" evidence="1">
    <location>
        <position position="422"/>
    </location>
    <ligand>
        <name>Mg(2+)</name>
        <dbReference type="ChEBI" id="CHEBI:18420"/>
        <label>1</label>
    </ligand>
</feature>
<feature type="binding site" evidence="1">
    <location>
        <position position="422"/>
    </location>
    <ligand>
        <name>Mg(2+)</name>
        <dbReference type="ChEBI" id="CHEBI:18420"/>
        <label>2</label>
    </ligand>
</feature>
<feature type="helix" evidence="3">
    <location>
        <begin position="12"/>
        <end position="26"/>
    </location>
</feature>
<feature type="helix" evidence="3">
    <location>
        <begin position="42"/>
        <end position="47"/>
    </location>
</feature>
<feature type="strand" evidence="4">
    <location>
        <begin position="49"/>
        <end position="51"/>
    </location>
</feature>
<feature type="strand" evidence="3">
    <location>
        <begin position="57"/>
        <end position="72"/>
    </location>
</feature>
<feature type="strand" evidence="3">
    <location>
        <begin position="75"/>
        <end position="83"/>
    </location>
</feature>
<feature type="strand" evidence="3">
    <location>
        <begin position="89"/>
        <end position="95"/>
    </location>
</feature>
<feature type="turn" evidence="3">
    <location>
        <begin position="96"/>
        <end position="98"/>
    </location>
</feature>
<feature type="helix" evidence="3">
    <location>
        <begin position="101"/>
        <end position="110"/>
    </location>
</feature>
<feature type="strand" evidence="3">
    <location>
        <begin position="116"/>
        <end position="125"/>
    </location>
</feature>
<feature type="strand" evidence="3">
    <location>
        <begin position="131"/>
        <end position="142"/>
    </location>
</feature>
<feature type="helix" evidence="3">
    <location>
        <begin position="157"/>
        <end position="162"/>
    </location>
</feature>
<feature type="helix" evidence="3">
    <location>
        <begin position="164"/>
        <end position="170"/>
    </location>
</feature>
<feature type="helix" evidence="3">
    <location>
        <begin position="172"/>
        <end position="194"/>
    </location>
</feature>
<feature type="strand" evidence="3">
    <location>
        <begin position="204"/>
        <end position="208"/>
    </location>
</feature>
<feature type="strand" evidence="3">
    <location>
        <begin position="211"/>
        <end position="214"/>
    </location>
</feature>
<feature type="strand" evidence="3">
    <location>
        <begin position="218"/>
        <end position="221"/>
    </location>
</feature>
<feature type="turn" evidence="3">
    <location>
        <begin position="222"/>
        <end position="225"/>
    </location>
</feature>
<feature type="strand" evidence="3">
    <location>
        <begin position="226"/>
        <end position="230"/>
    </location>
</feature>
<feature type="helix" evidence="3">
    <location>
        <begin position="235"/>
        <end position="243"/>
    </location>
</feature>
<feature type="strand" evidence="3">
    <location>
        <begin position="247"/>
        <end position="256"/>
    </location>
</feature>
<feature type="strand" evidence="3">
    <location>
        <begin position="267"/>
        <end position="277"/>
    </location>
</feature>
<feature type="helix" evidence="3">
    <location>
        <begin position="281"/>
        <end position="299"/>
    </location>
</feature>
<feature type="strand" evidence="3">
    <location>
        <begin position="303"/>
        <end position="306"/>
    </location>
</feature>
<feature type="strand" evidence="3">
    <location>
        <begin position="312"/>
        <end position="314"/>
    </location>
</feature>
<feature type="strand" evidence="3">
    <location>
        <begin position="320"/>
        <end position="323"/>
    </location>
</feature>
<feature type="helix" evidence="3">
    <location>
        <begin position="324"/>
        <end position="332"/>
    </location>
</feature>
<feature type="helix" evidence="3">
    <location>
        <begin position="342"/>
        <end position="351"/>
    </location>
</feature>
<feature type="helix" evidence="3">
    <location>
        <begin position="368"/>
        <end position="379"/>
    </location>
</feature>
<feature type="helix" evidence="3">
    <location>
        <begin position="381"/>
        <end position="383"/>
    </location>
</feature>
<feature type="strand" evidence="3">
    <location>
        <begin position="388"/>
        <end position="394"/>
    </location>
</feature>
<feature type="helix" evidence="3">
    <location>
        <begin position="395"/>
        <end position="397"/>
    </location>
</feature>
<feature type="strand" evidence="3">
    <location>
        <begin position="405"/>
        <end position="407"/>
    </location>
</feature>
<feature type="strand" evidence="3">
    <location>
        <begin position="410"/>
        <end position="418"/>
    </location>
</feature>
<feature type="strand" evidence="3">
    <location>
        <begin position="421"/>
        <end position="429"/>
    </location>
</feature>
<feature type="helix" evidence="3">
    <location>
        <begin position="433"/>
        <end position="446"/>
    </location>
</feature>
<feature type="helix" evidence="3">
    <location>
        <begin position="459"/>
        <end position="466"/>
    </location>
</feature>
<feature type="strand" evidence="3">
    <location>
        <begin position="472"/>
        <end position="478"/>
    </location>
</feature>
<feature type="helix" evidence="3">
    <location>
        <begin position="479"/>
        <end position="487"/>
    </location>
</feature>
<feature type="helix" evidence="3">
    <location>
        <begin position="491"/>
        <end position="494"/>
    </location>
</feature>
<feature type="strand" evidence="3">
    <location>
        <begin position="495"/>
        <end position="497"/>
    </location>
</feature>
<sequence length="505" mass="55709">MSAADTAEDLPEQFRIRRDKRARLLAQGRDPYPVAVPRTHTLAEVRAAHPDLPIDTATEDIVGVAGRVIFARNSGKLCFATLQDGDGTQLQVMISLDKVGQAALDAWKADVDLGDIVYVHGAVISSRRGELSVLADCWRIAAKSLRPLPVAHKEMSEESRVRQRYVDLIVRPEARAVARLRIAVVRAIRTALQRRGFLEVETPVLQTLAGGAAARPFATHSNALDIDLYLRIAPELFLKRCIVGGFDKVFELNRVFRNEGADSTHSPEFSMLETYQTYGTYDDSAVVTRELIQEVADEAIGTRQLPLPDGSVYDIDGEWATIQMYPSLSVALGEEITPQTTVDRLRGIADSLGLEKDPAIHDNRGFGHGKLIEELWERTVGKSLSAPTFVKDFPVQTTPLTRQHRSIPGVTEKWDLYLRGIELATGYSELSDPVVQRERFADQARAAAAGDDEAMVLDEDFLAALEYGMPPCTGTGMGIDRLLMSLTGLSIRETVLFPIVRPHSN</sequence>